<feature type="chain" id="PRO_0000139633" description="Hypoxanthine phosphoribosyltransferase">
    <location>
        <begin position="1"/>
        <end position="178"/>
    </location>
</feature>
<feature type="active site" description="Proton acceptor" evidence="2">
    <location>
        <position position="103"/>
    </location>
</feature>
<feature type="binding site" evidence="3">
    <location>
        <position position="43"/>
    </location>
    <ligand>
        <name>diphosphate</name>
        <dbReference type="ChEBI" id="CHEBI:33019"/>
    </ligand>
</feature>
<feature type="binding site" evidence="3">
    <location>
        <position position="44"/>
    </location>
    <ligand>
        <name>diphosphate</name>
        <dbReference type="ChEBI" id="CHEBI:33019"/>
    </ligand>
</feature>
<feature type="binding site" evidence="2">
    <location>
        <position position="99"/>
    </location>
    <ligand>
        <name>GMP</name>
        <dbReference type="ChEBI" id="CHEBI:58115"/>
    </ligand>
</feature>
<feature type="binding site" evidence="2">
    <location>
        <position position="99"/>
    </location>
    <ligand>
        <name>IMP</name>
        <dbReference type="ChEBI" id="CHEBI:58053"/>
    </ligand>
</feature>
<feature type="binding site" evidence="2">
    <location>
        <position position="99"/>
    </location>
    <ligand>
        <name>Mg(2+)</name>
        <dbReference type="ChEBI" id="CHEBI:18420"/>
    </ligand>
</feature>
<feature type="binding site" evidence="2">
    <location>
        <position position="100"/>
    </location>
    <ligand>
        <name>Mg(2+)</name>
        <dbReference type="ChEBI" id="CHEBI:18420"/>
    </ligand>
</feature>
<feature type="binding site" evidence="2">
    <location>
        <begin position="103"/>
        <end position="108"/>
    </location>
    <ligand>
        <name>GMP</name>
        <dbReference type="ChEBI" id="CHEBI:58115"/>
    </ligand>
</feature>
<feature type="binding site" evidence="2">
    <location>
        <begin position="103"/>
        <end position="108"/>
    </location>
    <ligand>
        <name>IMP</name>
        <dbReference type="ChEBI" id="CHEBI:58053"/>
    </ligand>
</feature>
<feature type="binding site" evidence="2">
    <location>
        <position position="131"/>
    </location>
    <ligand>
        <name>GMP</name>
        <dbReference type="ChEBI" id="CHEBI:58115"/>
    </ligand>
</feature>
<feature type="binding site" evidence="2">
    <location>
        <position position="131"/>
    </location>
    <ligand>
        <name>IMP</name>
        <dbReference type="ChEBI" id="CHEBI:58053"/>
    </ligand>
</feature>
<feature type="binding site" evidence="2">
    <location>
        <position position="159"/>
    </location>
    <ligand>
        <name>GMP</name>
        <dbReference type="ChEBI" id="CHEBI:58115"/>
    </ligand>
</feature>
<feature type="binding site" evidence="3">
    <location>
        <position position="165"/>
    </location>
    <ligand>
        <name>diphosphate</name>
        <dbReference type="ChEBI" id="CHEBI:33019"/>
    </ligand>
</feature>
<organism>
    <name type="scientific">Escherichia coli O6:H1 (strain CFT073 / ATCC 700928 / UPEC)</name>
    <dbReference type="NCBI Taxonomy" id="199310"/>
    <lineage>
        <taxon>Bacteria</taxon>
        <taxon>Pseudomonadati</taxon>
        <taxon>Pseudomonadota</taxon>
        <taxon>Gammaproteobacteria</taxon>
        <taxon>Enterobacterales</taxon>
        <taxon>Enterobacteriaceae</taxon>
        <taxon>Escherichia</taxon>
    </lineage>
</organism>
<keyword id="KW-0963">Cytoplasm</keyword>
<keyword id="KW-0328">Glycosyltransferase</keyword>
<keyword id="KW-0460">Magnesium</keyword>
<keyword id="KW-0479">Metal-binding</keyword>
<keyword id="KW-0547">Nucleotide-binding</keyword>
<keyword id="KW-0660">Purine salvage</keyword>
<keyword id="KW-1185">Reference proteome</keyword>
<keyword id="KW-0808">Transferase</keyword>
<accession>P0A9M3</accession>
<accession>P36766</accession>
<comment type="function">
    <text evidence="2">Purine salvage pathway enzyme which catalyzes the transfer of the ribosyl-5-phosphate group from 5-phospho-alpha-D-ribose 1-diphosphate (PRPP) to the N9 position of hypoxanthine to yield IMP (inosine 5'-monophosphate). To a lesser extent, can also act on guanine leading to GMP, but shows a highly less efficient activity with xanthine.</text>
</comment>
<comment type="catalytic activity">
    <reaction evidence="2">
        <text>IMP + diphosphate = hypoxanthine + 5-phospho-alpha-D-ribose 1-diphosphate</text>
        <dbReference type="Rhea" id="RHEA:17973"/>
        <dbReference type="ChEBI" id="CHEBI:17368"/>
        <dbReference type="ChEBI" id="CHEBI:33019"/>
        <dbReference type="ChEBI" id="CHEBI:58017"/>
        <dbReference type="ChEBI" id="CHEBI:58053"/>
        <dbReference type="EC" id="2.4.2.8"/>
    </reaction>
    <physiologicalReaction direction="right-to-left" evidence="2">
        <dbReference type="Rhea" id="RHEA:17975"/>
    </physiologicalReaction>
</comment>
<comment type="catalytic activity">
    <reaction evidence="2">
        <text>GMP + diphosphate = guanine + 5-phospho-alpha-D-ribose 1-diphosphate</text>
        <dbReference type="Rhea" id="RHEA:25424"/>
        <dbReference type="ChEBI" id="CHEBI:16235"/>
        <dbReference type="ChEBI" id="CHEBI:33019"/>
        <dbReference type="ChEBI" id="CHEBI:58017"/>
        <dbReference type="ChEBI" id="CHEBI:58115"/>
        <dbReference type="EC" id="2.4.2.8"/>
    </reaction>
    <physiologicalReaction direction="right-to-left" evidence="2">
        <dbReference type="Rhea" id="RHEA:25426"/>
    </physiologicalReaction>
</comment>
<comment type="cofactor">
    <cofactor evidence="2">
        <name>Mg(2+)</name>
        <dbReference type="ChEBI" id="CHEBI:18420"/>
    </cofactor>
</comment>
<comment type="pathway">
    <text evidence="2">Purine metabolism; IMP biosynthesis via salvage pathway; IMP from hypoxanthine: step 1/1.</text>
</comment>
<comment type="subunit">
    <text evidence="2">Homotetramer.</text>
</comment>
<comment type="subcellular location">
    <subcellularLocation>
        <location evidence="1">Cytoplasm</location>
    </subcellularLocation>
</comment>
<comment type="similarity">
    <text evidence="4">Belongs to the purine/pyrimidine phosphoribosyltransferase family.</text>
</comment>
<comment type="sequence caution" evidence="4">
    <conflict type="erroneous initiation">
        <sequence resource="EMBL-CDS" id="AAN78648"/>
    </conflict>
</comment>
<reference key="1">
    <citation type="journal article" date="2002" name="Proc. Natl. Acad. Sci. U.S.A.">
        <title>Extensive mosaic structure revealed by the complete genome sequence of uropathogenic Escherichia coli.</title>
        <authorList>
            <person name="Welch R.A."/>
            <person name="Burland V."/>
            <person name="Plunkett G. III"/>
            <person name="Redford P."/>
            <person name="Roesch P."/>
            <person name="Rasko D."/>
            <person name="Buckles E.L."/>
            <person name="Liou S.-R."/>
            <person name="Boutin A."/>
            <person name="Hackett J."/>
            <person name="Stroud D."/>
            <person name="Mayhew G.F."/>
            <person name="Rose D.J."/>
            <person name="Zhou S."/>
            <person name="Schwartz D.C."/>
            <person name="Perna N.T."/>
            <person name="Mobley H.L.T."/>
            <person name="Donnenberg M.S."/>
            <person name="Blattner F.R."/>
        </authorList>
    </citation>
    <scope>NUCLEOTIDE SEQUENCE [LARGE SCALE GENOMIC DNA]</scope>
    <source>
        <strain>CFT073 / ATCC 700928 / UPEC</strain>
    </source>
</reference>
<name>HPRT_ECOL6</name>
<sequence>MKHTVEVMIPEAEIKARIAELGRQITERYKDSGSDMVLVGLLRGSFMFMADLCREVQVSHEVDFMTASSYGSGMSTTRDVKILKDLDEDIRGKDVLIVEDIIDSGNTLSKVREILSLREPKSLAICTLLDKPSRREVNVPVEFIGFSIPDEFVVGYGIDYAQRYRHLPYIGKVILLDE</sequence>
<evidence type="ECO:0000250" key="1"/>
<evidence type="ECO:0000250" key="2">
    <source>
        <dbReference type="UniProtKB" id="P0A9M2"/>
    </source>
</evidence>
<evidence type="ECO:0000250" key="3">
    <source>
        <dbReference type="UniProtKB" id="P9WHQ9"/>
    </source>
</evidence>
<evidence type="ECO:0000305" key="4"/>
<protein>
    <recommendedName>
        <fullName>Hypoxanthine phosphoribosyltransferase</fullName>
        <shortName>HPRT</shortName>
        <ecNumber evidence="2">2.4.2.8</ecNumber>
    </recommendedName>
</protein>
<dbReference type="EC" id="2.4.2.8" evidence="2"/>
<dbReference type="EMBL" id="AE014075">
    <property type="protein sequence ID" value="AAN78648.1"/>
    <property type="status" value="ALT_INIT"/>
    <property type="molecule type" value="Genomic_DNA"/>
</dbReference>
<dbReference type="RefSeq" id="WP_000683335.1">
    <property type="nucleotide sequence ID" value="NZ_CP051263.1"/>
</dbReference>
<dbReference type="SMR" id="P0A9M3"/>
<dbReference type="STRING" id="199310.c0154"/>
<dbReference type="GeneID" id="86862633"/>
<dbReference type="KEGG" id="ecc:c0154"/>
<dbReference type="eggNOG" id="COG0634">
    <property type="taxonomic scope" value="Bacteria"/>
</dbReference>
<dbReference type="HOGENOM" id="CLU_073615_0_0_6"/>
<dbReference type="UniPathway" id="UPA00591">
    <property type="reaction ID" value="UER00648"/>
</dbReference>
<dbReference type="Proteomes" id="UP000001410">
    <property type="component" value="Chromosome"/>
</dbReference>
<dbReference type="GO" id="GO:0005829">
    <property type="term" value="C:cytosol"/>
    <property type="evidence" value="ECO:0007669"/>
    <property type="project" value="TreeGrafter"/>
</dbReference>
<dbReference type="GO" id="GO:0052657">
    <property type="term" value="F:guanine phosphoribosyltransferase activity"/>
    <property type="evidence" value="ECO:0007669"/>
    <property type="project" value="RHEA"/>
</dbReference>
<dbReference type="GO" id="GO:0004422">
    <property type="term" value="F:hypoxanthine phosphoribosyltransferase activity"/>
    <property type="evidence" value="ECO:0007669"/>
    <property type="project" value="InterPro"/>
</dbReference>
<dbReference type="GO" id="GO:0000287">
    <property type="term" value="F:magnesium ion binding"/>
    <property type="evidence" value="ECO:0007669"/>
    <property type="project" value="TreeGrafter"/>
</dbReference>
<dbReference type="GO" id="GO:0000166">
    <property type="term" value="F:nucleotide binding"/>
    <property type="evidence" value="ECO:0007669"/>
    <property type="project" value="UniProtKB-KW"/>
</dbReference>
<dbReference type="GO" id="GO:0032263">
    <property type="term" value="P:GMP salvage"/>
    <property type="evidence" value="ECO:0007669"/>
    <property type="project" value="TreeGrafter"/>
</dbReference>
<dbReference type="GO" id="GO:0006178">
    <property type="term" value="P:guanine salvage"/>
    <property type="evidence" value="ECO:0007669"/>
    <property type="project" value="TreeGrafter"/>
</dbReference>
<dbReference type="GO" id="GO:0046100">
    <property type="term" value="P:hypoxanthine metabolic process"/>
    <property type="evidence" value="ECO:0007669"/>
    <property type="project" value="TreeGrafter"/>
</dbReference>
<dbReference type="GO" id="GO:0032264">
    <property type="term" value="P:IMP salvage"/>
    <property type="evidence" value="ECO:0007669"/>
    <property type="project" value="UniProtKB-UniPathway"/>
</dbReference>
<dbReference type="GO" id="GO:0006166">
    <property type="term" value="P:purine ribonucleoside salvage"/>
    <property type="evidence" value="ECO:0007669"/>
    <property type="project" value="UniProtKB-KW"/>
</dbReference>
<dbReference type="CDD" id="cd06223">
    <property type="entry name" value="PRTases_typeI"/>
    <property type="match status" value="1"/>
</dbReference>
<dbReference type="FunFam" id="3.40.50.2020:FF:000006">
    <property type="entry name" value="Hypoxanthine phosphoribosyltransferase"/>
    <property type="match status" value="1"/>
</dbReference>
<dbReference type="Gene3D" id="3.40.50.2020">
    <property type="match status" value="1"/>
</dbReference>
<dbReference type="InterPro" id="IPR050408">
    <property type="entry name" value="HGPRT"/>
</dbReference>
<dbReference type="InterPro" id="IPR005904">
    <property type="entry name" value="Hxn_phspho_trans"/>
</dbReference>
<dbReference type="InterPro" id="IPR000836">
    <property type="entry name" value="PRibTrfase_dom"/>
</dbReference>
<dbReference type="InterPro" id="IPR029057">
    <property type="entry name" value="PRTase-like"/>
</dbReference>
<dbReference type="NCBIfam" id="TIGR01203">
    <property type="entry name" value="HGPRTase"/>
    <property type="match status" value="1"/>
</dbReference>
<dbReference type="PANTHER" id="PTHR43340:SF1">
    <property type="entry name" value="HYPOXANTHINE PHOSPHORIBOSYLTRANSFERASE"/>
    <property type="match status" value="1"/>
</dbReference>
<dbReference type="PANTHER" id="PTHR43340">
    <property type="entry name" value="HYPOXANTHINE-GUANINE PHOSPHORIBOSYLTRANSFERASE"/>
    <property type="match status" value="1"/>
</dbReference>
<dbReference type="Pfam" id="PF00156">
    <property type="entry name" value="Pribosyltran"/>
    <property type="match status" value="1"/>
</dbReference>
<dbReference type="SUPFAM" id="SSF53271">
    <property type="entry name" value="PRTase-like"/>
    <property type="match status" value="1"/>
</dbReference>
<dbReference type="PROSITE" id="PS00103">
    <property type="entry name" value="PUR_PYR_PR_TRANSFER"/>
    <property type="match status" value="1"/>
</dbReference>
<gene>
    <name type="primary">hpt</name>
    <name type="ordered locus">c0154</name>
</gene>
<proteinExistence type="inferred from homology"/>